<accession>Q9PNJ9</accession>
<accession>Q0P9F9</accession>
<evidence type="ECO:0000255" key="1">
    <source>
        <dbReference type="HAMAP-Rule" id="MF_01148"/>
    </source>
</evidence>
<gene>
    <name evidence="1" type="primary">lnt</name>
    <name type="ordered locus">Cj1095</name>
</gene>
<keyword id="KW-0012">Acyltransferase</keyword>
<keyword id="KW-0997">Cell inner membrane</keyword>
<keyword id="KW-1003">Cell membrane</keyword>
<keyword id="KW-0472">Membrane</keyword>
<keyword id="KW-1185">Reference proteome</keyword>
<keyword id="KW-0808">Transferase</keyword>
<keyword id="KW-0812">Transmembrane</keyword>
<keyword id="KW-1133">Transmembrane helix</keyword>
<reference key="1">
    <citation type="journal article" date="2000" name="Nature">
        <title>The genome sequence of the food-borne pathogen Campylobacter jejuni reveals hypervariable sequences.</title>
        <authorList>
            <person name="Parkhill J."/>
            <person name="Wren B.W."/>
            <person name="Mungall K.L."/>
            <person name="Ketley J.M."/>
            <person name="Churcher C.M."/>
            <person name="Basham D."/>
            <person name="Chillingworth T."/>
            <person name="Davies R.M."/>
            <person name="Feltwell T."/>
            <person name="Holroyd S."/>
            <person name="Jagels K."/>
            <person name="Karlyshev A.V."/>
            <person name="Moule S."/>
            <person name="Pallen M.J."/>
            <person name="Penn C.W."/>
            <person name="Quail M.A."/>
            <person name="Rajandream M.A."/>
            <person name="Rutherford K.M."/>
            <person name="van Vliet A.H.M."/>
            <person name="Whitehead S."/>
            <person name="Barrell B.G."/>
        </authorList>
    </citation>
    <scope>NUCLEOTIDE SEQUENCE [LARGE SCALE GENOMIC DNA]</scope>
    <source>
        <strain>ATCC 700819 / NCTC 11168</strain>
    </source>
</reference>
<comment type="function">
    <text evidence="1">Catalyzes the phospholipid dependent N-acylation of the N-terminal cysteine of apolipoprotein, the last step in lipoprotein maturation.</text>
</comment>
<comment type="catalytic activity">
    <reaction evidence="1">
        <text>N-terminal S-1,2-diacyl-sn-glyceryl-L-cysteinyl-[lipoprotein] + a glycerophospholipid = N-acyl-S-1,2-diacyl-sn-glyceryl-L-cysteinyl-[lipoprotein] + a 2-acyl-sn-glycero-3-phospholipid + H(+)</text>
        <dbReference type="Rhea" id="RHEA:48228"/>
        <dbReference type="Rhea" id="RHEA-COMP:14681"/>
        <dbReference type="Rhea" id="RHEA-COMP:14684"/>
        <dbReference type="ChEBI" id="CHEBI:15378"/>
        <dbReference type="ChEBI" id="CHEBI:136912"/>
        <dbReference type="ChEBI" id="CHEBI:140656"/>
        <dbReference type="ChEBI" id="CHEBI:140657"/>
        <dbReference type="ChEBI" id="CHEBI:140660"/>
        <dbReference type="EC" id="2.3.1.269"/>
    </reaction>
</comment>
<comment type="pathway">
    <text evidence="1">Protein modification; lipoprotein biosynthesis (N-acyl transfer).</text>
</comment>
<comment type="subcellular location">
    <subcellularLocation>
        <location evidence="1">Cell inner membrane</location>
        <topology evidence="1">Multi-pass membrane protein</topology>
    </subcellularLocation>
</comment>
<comment type="similarity">
    <text evidence="1">Belongs to the CN hydrolase family. Apolipoprotein N-acyltransferase subfamily.</text>
</comment>
<sequence length="441" mass="52109">MKLKLNFLPYFSFIPKKLNTNSIIFKIIKVFFIAILLSNSIYLSFFENIFTQTISPFLAIWGLVLLLKSKTSKQYFWIGFFVGILWFWWIGLSSIYFNLNYLVPIIPIIIGFIYGLLFRLCYLLKFDFLRLCGIFCISFIHPLGFDWFNWGIFTVYGFFDPSYRGIICIFLIAYFIYEGYISRYYKIAIVLILFFSGFQYNEKQAQTLNLNYKLINTNISQDQKFLQENLKSNSDILIQDILQAINEKKELVILPETAFAFDLKNTKYELMLKELSYKITIITGAFHVEKEHTYNSTYIFKKGNVYILNKHFLVPFGEEIPFFKDLTKKYFLKNIEEFSKGPIQSKYKLDNQIITNAICYEATKEQNYQNSQIIIALSNNAWFNNSSEYKLQQLLMKFYASKYGVSVYHATNGKENIVILPKKLLSKDWKNLSKEIFNDKK</sequence>
<dbReference type="EC" id="2.3.1.269" evidence="1"/>
<dbReference type="EMBL" id="AL111168">
    <property type="protein sequence ID" value="CAL35212.1"/>
    <property type="molecule type" value="Genomic_DNA"/>
</dbReference>
<dbReference type="PIR" id="B81313">
    <property type="entry name" value="B81313"/>
</dbReference>
<dbReference type="RefSeq" id="WP_002852744.1">
    <property type="nucleotide sequence ID" value="NZ_SZUC01000001.1"/>
</dbReference>
<dbReference type="RefSeq" id="YP_002344488.1">
    <property type="nucleotide sequence ID" value="NC_002163.1"/>
</dbReference>
<dbReference type="SMR" id="Q9PNJ9"/>
<dbReference type="STRING" id="192222.Cj1095"/>
<dbReference type="PaxDb" id="192222-Cj1095"/>
<dbReference type="EnsemblBacteria" id="CAL35212">
    <property type="protein sequence ID" value="CAL35212"/>
    <property type="gene ID" value="Cj1095"/>
</dbReference>
<dbReference type="GeneID" id="905386"/>
<dbReference type="KEGG" id="cje:Cj1095"/>
<dbReference type="PATRIC" id="fig|192222.6.peg.1077"/>
<dbReference type="eggNOG" id="COG0815">
    <property type="taxonomic scope" value="Bacteria"/>
</dbReference>
<dbReference type="HOGENOM" id="CLU_050649_0_0_7"/>
<dbReference type="OrthoDB" id="9804277at2"/>
<dbReference type="UniPathway" id="UPA00666"/>
<dbReference type="Proteomes" id="UP000000799">
    <property type="component" value="Chromosome"/>
</dbReference>
<dbReference type="GO" id="GO:0005886">
    <property type="term" value="C:plasma membrane"/>
    <property type="evidence" value="ECO:0007669"/>
    <property type="project" value="UniProtKB-SubCell"/>
</dbReference>
<dbReference type="GO" id="GO:0016410">
    <property type="term" value="F:N-acyltransferase activity"/>
    <property type="evidence" value="ECO:0007669"/>
    <property type="project" value="UniProtKB-UniRule"/>
</dbReference>
<dbReference type="GO" id="GO:0042158">
    <property type="term" value="P:lipoprotein biosynthetic process"/>
    <property type="evidence" value="ECO:0007669"/>
    <property type="project" value="UniProtKB-UniRule"/>
</dbReference>
<dbReference type="Gene3D" id="3.60.110.10">
    <property type="entry name" value="Carbon-nitrogen hydrolase"/>
    <property type="match status" value="1"/>
</dbReference>
<dbReference type="HAMAP" id="MF_01148">
    <property type="entry name" value="Lnt"/>
    <property type="match status" value="1"/>
</dbReference>
<dbReference type="InterPro" id="IPR004563">
    <property type="entry name" value="Apolipo_AcylTrfase"/>
</dbReference>
<dbReference type="InterPro" id="IPR003010">
    <property type="entry name" value="C-N_Hydrolase"/>
</dbReference>
<dbReference type="InterPro" id="IPR036526">
    <property type="entry name" value="C-N_Hydrolase_sf"/>
</dbReference>
<dbReference type="NCBIfam" id="TIGR00546">
    <property type="entry name" value="lnt"/>
    <property type="match status" value="1"/>
</dbReference>
<dbReference type="NCBIfam" id="NF008934">
    <property type="entry name" value="PRK12291.1"/>
    <property type="match status" value="1"/>
</dbReference>
<dbReference type="PANTHER" id="PTHR38686">
    <property type="entry name" value="APOLIPOPROTEIN N-ACYLTRANSFERASE"/>
    <property type="match status" value="1"/>
</dbReference>
<dbReference type="PANTHER" id="PTHR38686:SF1">
    <property type="entry name" value="APOLIPOPROTEIN N-ACYLTRANSFERASE"/>
    <property type="match status" value="1"/>
</dbReference>
<dbReference type="SUPFAM" id="SSF56317">
    <property type="entry name" value="Carbon-nitrogen hydrolase"/>
    <property type="match status" value="1"/>
</dbReference>
<dbReference type="PROSITE" id="PS50263">
    <property type="entry name" value="CN_HYDROLASE"/>
    <property type="match status" value="1"/>
</dbReference>
<protein>
    <recommendedName>
        <fullName evidence="1">Apolipoprotein N-acyltransferase</fullName>
        <shortName evidence="1">ALP N-acyltransferase</shortName>
        <ecNumber evidence="1">2.3.1.269</ecNumber>
    </recommendedName>
</protein>
<proteinExistence type="inferred from homology"/>
<name>LNT_CAMJE</name>
<feature type="chain" id="PRO_0000178052" description="Apolipoprotein N-acyltransferase">
    <location>
        <begin position="1"/>
        <end position="441"/>
    </location>
</feature>
<feature type="transmembrane region" description="Helical" evidence="1">
    <location>
        <begin position="23"/>
        <end position="43"/>
    </location>
</feature>
<feature type="transmembrane region" description="Helical" evidence="1">
    <location>
        <begin position="45"/>
        <end position="65"/>
    </location>
</feature>
<feature type="transmembrane region" description="Helical" evidence="1">
    <location>
        <begin position="75"/>
        <end position="95"/>
    </location>
</feature>
<feature type="transmembrane region" description="Helical" evidence="1">
    <location>
        <begin position="97"/>
        <end position="117"/>
    </location>
</feature>
<feature type="transmembrane region" description="Helical" evidence="1">
    <location>
        <begin position="133"/>
        <end position="153"/>
    </location>
</feature>
<feature type="transmembrane region" description="Helical" evidence="1">
    <location>
        <begin position="156"/>
        <end position="176"/>
    </location>
</feature>
<feature type="transmembrane region" description="Helical" evidence="1">
    <location>
        <begin position="178"/>
        <end position="198"/>
    </location>
</feature>
<feature type="domain" description="CN hydrolase" evidence="1">
    <location>
        <begin position="215"/>
        <end position="441"/>
    </location>
</feature>
<feature type="active site" description="Proton acceptor" evidence="1">
    <location>
        <position position="256"/>
    </location>
</feature>
<feature type="active site" evidence="1">
    <location>
        <position position="310"/>
    </location>
</feature>
<feature type="active site" description="Nucleophile" evidence="1">
    <location>
        <position position="359"/>
    </location>
</feature>
<organism>
    <name type="scientific">Campylobacter jejuni subsp. jejuni serotype O:2 (strain ATCC 700819 / NCTC 11168)</name>
    <dbReference type="NCBI Taxonomy" id="192222"/>
    <lineage>
        <taxon>Bacteria</taxon>
        <taxon>Pseudomonadati</taxon>
        <taxon>Campylobacterota</taxon>
        <taxon>Epsilonproteobacteria</taxon>
        <taxon>Campylobacterales</taxon>
        <taxon>Campylobacteraceae</taxon>
        <taxon>Campylobacter</taxon>
    </lineage>
</organism>